<evidence type="ECO:0000255" key="1">
    <source>
        <dbReference type="HAMAP-Rule" id="MF_01395"/>
    </source>
</evidence>
<evidence type="ECO:0000255" key="2">
    <source>
        <dbReference type="PROSITE-ProRule" id="PRU01136"/>
    </source>
</evidence>
<protein>
    <recommendedName>
        <fullName evidence="1">Acetyl-coenzyme A carboxylase carboxyl transferase subunit beta</fullName>
        <shortName evidence="1">ACCase subunit beta</shortName>
        <shortName evidence="1">Acetyl-CoA carboxylase carboxyltransferase subunit beta</shortName>
        <ecNumber evidence="1">2.1.3.15</ecNumber>
    </recommendedName>
</protein>
<comment type="function">
    <text evidence="1">Component of the acetyl coenzyme A carboxylase (ACC) complex. Biotin carboxylase (BC) catalyzes the carboxylation of biotin on its carrier protein (BCCP) and then the CO(2) group is transferred by the transcarboxylase to acetyl-CoA to form malonyl-CoA.</text>
</comment>
<comment type="catalytic activity">
    <reaction evidence="1">
        <text>N(6)-carboxybiotinyl-L-lysyl-[protein] + acetyl-CoA = N(6)-biotinyl-L-lysyl-[protein] + malonyl-CoA</text>
        <dbReference type="Rhea" id="RHEA:54728"/>
        <dbReference type="Rhea" id="RHEA-COMP:10505"/>
        <dbReference type="Rhea" id="RHEA-COMP:10506"/>
        <dbReference type="ChEBI" id="CHEBI:57288"/>
        <dbReference type="ChEBI" id="CHEBI:57384"/>
        <dbReference type="ChEBI" id="CHEBI:83144"/>
        <dbReference type="ChEBI" id="CHEBI:83145"/>
        <dbReference type="EC" id="2.1.3.15"/>
    </reaction>
</comment>
<comment type="pathway">
    <text evidence="1">Lipid metabolism; malonyl-CoA biosynthesis; malonyl-CoA from acetyl-CoA: step 1/1.</text>
</comment>
<comment type="subunit">
    <text evidence="1">Acetyl-CoA carboxylase is a heterohexamer composed of biotin carboxyl carrier protein (AccB), biotin carboxylase (AccC) and two subunits each of ACCase subunit alpha (AccA) and ACCase subunit beta (AccD).</text>
</comment>
<comment type="subcellular location">
    <subcellularLocation>
        <location evidence="1">Cytoplasm</location>
    </subcellularLocation>
</comment>
<comment type="similarity">
    <text evidence="1">Belongs to the AccD/PCCB family.</text>
</comment>
<gene>
    <name evidence="1" type="primary">accD</name>
    <name type="ordered locus">Atu0020</name>
    <name type="ORF">AGR_C_32</name>
</gene>
<name>ACCD_AGRFC</name>
<keyword id="KW-0067">ATP-binding</keyword>
<keyword id="KW-0963">Cytoplasm</keyword>
<keyword id="KW-0275">Fatty acid biosynthesis</keyword>
<keyword id="KW-0276">Fatty acid metabolism</keyword>
<keyword id="KW-0444">Lipid biosynthesis</keyword>
<keyword id="KW-0443">Lipid metabolism</keyword>
<keyword id="KW-0547">Nucleotide-binding</keyword>
<keyword id="KW-1185">Reference proteome</keyword>
<keyword id="KW-0808">Transferase</keyword>
<accession>A9CKT0</accession>
<reference key="1">
    <citation type="journal article" date="2001" name="Science">
        <title>The genome of the natural genetic engineer Agrobacterium tumefaciens C58.</title>
        <authorList>
            <person name="Wood D.W."/>
            <person name="Setubal J.C."/>
            <person name="Kaul R."/>
            <person name="Monks D.E."/>
            <person name="Kitajima J.P."/>
            <person name="Okura V.K."/>
            <person name="Zhou Y."/>
            <person name="Chen L."/>
            <person name="Wood G.E."/>
            <person name="Almeida N.F. Jr."/>
            <person name="Woo L."/>
            <person name="Chen Y."/>
            <person name="Paulsen I.T."/>
            <person name="Eisen J.A."/>
            <person name="Karp P.D."/>
            <person name="Bovee D. Sr."/>
            <person name="Chapman P."/>
            <person name="Clendenning J."/>
            <person name="Deatherage G."/>
            <person name="Gillet W."/>
            <person name="Grant C."/>
            <person name="Kutyavin T."/>
            <person name="Levy R."/>
            <person name="Li M.-J."/>
            <person name="McClelland E."/>
            <person name="Palmieri A."/>
            <person name="Raymond C."/>
            <person name="Rouse G."/>
            <person name="Saenphimmachak C."/>
            <person name="Wu Z."/>
            <person name="Romero P."/>
            <person name="Gordon D."/>
            <person name="Zhang S."/>
            <person name="Yoo H."/>
            <person name="Tao Y."/>
            <person name="Biddle P."/>
            <person name="Jung M."/>
            <person name="Krespan W."/>
            <person name="Perry M."/>
            <person name="Gordon-Kamm B."/>
            <person name="Liao L."/>
            <person name="Kim S."/>
            <person name="Hendrick C."/>
            <person name="Zhao Z.-Y."/>
            <person name="Dolan M."/>
            <person name="Chumley F."/>
            <person name="Tingey S.V."/>
            <person name="Tomb J.-F."/>
            <person name="Gordon M.P."/>
            <person name="Olson M.V."/>
            <person name="Nester E.W."/>
        </authorList>
    </citation>
    <scope>NUCLEOTIDE SEQUENCE [LARGE SCALE GENOMIC DNA]</scope>
    <source>
        <strain>C58 / ATCC 33970</strain>
    </source>
</reference>
<reference key="2">
    <citation type="journal article" date="2001" name="Science">
        <title>Genome sequence of the plant pathogen and biotechnology agent Agrobacterium tumefaciens C58.</title>
        <authorList>
            <person name="Goodner B."/>
            <person name="Hinkle G."/>
            <person name="Gattung S."/>
            <person name="Miller N."/>
            <person name="Blanchard M."/>
            <person name="Qurollo B."/>
            <person name="Goldman B.S."/>
            <person name="Cao Y."/>
            <person name="Askenazi M."/>
            <person name="Halling C."/>
            <person name="Mullin L."/>
            <person name="Houmiel K."/>
            <person name="Gordon J."/>
            <person name="Vaudin M."/>
            <person name="Iartchouk O."/>
            <person name="Epp A."/>
            <person name="Liu F."/>
            <person name="Wollam C."/>
            <person name="Allinger M."/>
            <person name="Doughty D."/>
            <person name="Scott C."/>
            <person name="Lappas C."/>
            <person name="Markelz B."/>
            <person name="Flanagan C."/>
            <person name="Crowell C."/>
            <person name="Gurson J."/>
            <person name="Lomo C."/>
            <person name="Sear C."/>
            <person name="Strub G."/>
            <person name="Cielo C."/>
            <person name="Slater S."/>
        </authorList>
    </citation>
    <scope>NUCLEOTIDE SEQUENCE [LARGE SCALE GENOMIC DNA]</scope>
    <source>
        <strain>C58 / ATCC 33970</strain>
    </source>
</reference>
<organism>
    <name type="scientific">Agrobacterium fabrum (strain C58 / ATCC 33970)</name>
    <name type="common">Agrobacterium tumefaciens (strain C58)</name>
    <dbReference type="NCBI Taxonomy" id="176299"/>
    <lineage>
        <taxon>Bacteria</taxon>
        <taxon>Pseudomonadati</taxon>
        <taxon>Pseudomonadota</taxon>
        <taxon>Alphaproteobacteria</taxon>
        <taxon>Hyphomicrobiales</taxon>
        <taxon>Rhizobiaceae</taxon>
        <taxon>Rhizobium/Agrobacterium group</taxon>
        <taxon>Agrobacterium</taxon>
        <taxon>Agrobacterium tumefaciens complex</taxon>
    </lineage>
</organism>
<dbReference type="EC" id="2.1.3.15" evidence="1"/>
<dbReference type="EMBL" id="AE007869">
    <property type="protein sequence ID" value="AAK85845.1"/>
    <property type="molecule type" value="Genomic_DNA"/>
</dbReference>
<dbReference type="PIR" id="AE2579">
    <property type="entry name" value="AE2579"/>
</dbReference>
<dbReference type="PIR" id="D97361">
    <property type="entry name" value="D97361"/>
</dbReference>
<dbReference type="RefSeq" id="NP_353060.1">
    <property type="nucleotide sequence ID" value="NC_003062.2"/>
</dbReference>
<dbReference type="RefSeq" id="WP_006311090.1">
    <property type="nucleotide sequence ID" value="NC_003062.2"/>
</dbReference>
<dbReference type="SMR" id="A9CKT0"/>
<dbReference type="STRING" id="176299.Atu0020"/>
<dbReference type="EnsemblBacteria" id="AAK85845">
    <property type="protein sequence ID" value="AAK85845"/>
    <property type="gene ID" value="Atu0020"/>
</dbReference>
<dbReference type="GeneID" id="1132058"/>
<dbReference type="KEGG" id="atu:Atu0020"/>
<dbReference type="PATRIC" id="fig|176299.10.peg.21"/>
<dbReference type="eggNOG" id="COG0777">
    <property type="taxonomic scope" value="Bacteria"/>
</dbReference>
<dbReference type="HOGENOM" id="CLU_015486_1_0_5"/>
<dbReference type="OrthoDB" id="9772975at2"/>
<dbReference type="PhylomeDB" id="A9CKT0"/>
<dbReference type="BioCyc" id="AGRO:ATU0020-MONOMER"/>
<dbReference type="UniPathway" id="UPA00655">
    <property type="reaction ID" value="UER00711"/>
</dbReference>
<dbReference type="Proteomes" id="UP000000813">
    <property type="component" value="Chromosome circular"/>
</dbReference>
<dbReference type="GO" id="GO:0009329">
    <property type="term" value="C:acetate CoA-transferase complex"/>
    <property type="evidence" value="ECO:0007669"/>
    <property type="project" value="TreeGrafter"/>
</dbReference>
<dbReference type="GO" id="GO:0003989">
    <property type="term" value="F:acetyl-CoA carboxylase activity"/>
    <property type="evidence" value="ECO:0007669"/>
    <property type="project" value="InterPro"/>
</dbReference>
<dbReference type="GO" id="GO:0005524">
    <property type="term" value="F:ATP binding"/>
    <property type="evidence" value="ECO:0007669"/>
    <property type="project" value="UniProtKB-KW"/>
</dbReference>
<dbReference type="GO" id="GO:0016743">
    <property type="term" value="F:carboxyl- or carbamoyltransferase activity"/>
    <property type="evidence" value="ECO:0007669"/>
    <property type="project" value="UniProtKB-UniRule"/>
</dbReference>
<dbReference type="GO" id="GO:0006633">
    <property type="term" value="P:fatty acid biosynthetic process"/>
    <property type="evidence" value="ECO:0007669"/>
    <property type="project" value="UniProtKB-KW"/>
</dbReference>
<dbReference type="GO" id="GO:2001295">
    <property type="term" value="P:malonyl-CoA biosynthetic process"/>
    <property type="evidence" value="ECO:0007669"/>
    <property type="project" value="UniProtKB-UniRule"/>
</dbReference>
<dbReference type="Gene3D" id="3.90.226.10">
    <property type="entry name" value="2-enoyl-CoA Hydratase, Chain A, domain 1"/>
    <property type="match status" value="1"/>
</dbReference>
<dbReference type="HAMAP" id="MF_01395">
    <property type="entry name" value="AcetylCoA_CT_beta"/>
    <property type="match status" value="1"/>
</dbReference>
<dbReference type="InterPro" id="IPR034733">
    <property type="entry name" value="AcCoA_carboxyl_beta"/>
</dbReference>
<dbReference type="InterPro" id="IPR000438">
    <property type="entry name" value="Acetyl_CoA_COase_Trfase_b_su"/>
</dbReference>
<dbReference type="InterPro" id="IPR029045">
    <property type="entry name" value="ClpP/crotonase-like_dom_sf"/>
</dbReference>
<dbReference type="InterPro" id="IPR011762">
    <property type="entry name" value="COA_CT_N"/>
</dbReference>
<dbReference type="NCBIfam" id="TIGR00515">
    <property type="entry name" value="accD"/>
    <property type="match status" value="1"/>
</dbReference>
<dbReference type="PANTHER" id="PTHR42995">
    <property type="entry name" value="ACETYL-COENZYME A CARBOXYLASE CARBOXYL TRANSFERASE SUBUNIT BETA, CHLOROPLASTIC"/>
    <property type="match status" value="1"/>
</dbReference>
<dbReference type="PANTHER" id="PTHR42995:SF5">
    <property type="entry name" value="ACETYL-COENZYME A CARBOXYLASE CARBOXYL TRANSFERASE SUBUNIT BETA, CHLOROPLASTIC"/>
    <property type="match status" value="1"/>
</dbReference>
<dbReference type="Pfam" id="PF01039">
    <property type="entry name" value="Carboxyl_trans"/>
    <property type="match status" value="1"/>
</dbReference>
<dbReference type="PRINTS" id="PR01070">
    <property type="entry name" value="ACCCTRFRASEB"/>
</dbReference>
<dbReference type="SUPFAM" id="SSF52096">
    <property type="entry name" value="ClpP/crotonase"/>
    <property type="match status" value="1"/>
</dbReference>
<dbReference type="PROSITE" id="PS50980">
    <property type="entry name" value="COA_CT_NTER"/>
    <property type="match status" value="1"/>
</dbReference>
<sequence>MNWITNYVRPRINSMLGRRPEVPENLWIKCPETGEMVFHKDLEDNKWVIPASGYHMKMPAKARLADLFDGGIYEALAQPKVAQDPLKFRDSKKYTDRLRDSRAKTEQEDTILAGVGLLKGLKIVAVVHEFQFMAGSLGIAAGEAIVKAFERAISERCPLVMFPASGGARMQEGILSLMQLPRTTVAVNMLKEAGMPYIVVLTNPTTGGVTASYAMLGDVHIAEPGAEICFAGKRVIEQTIREKLPEGFQTSEYLLEHGMVDMVIDRREIPDTLASMLKIMTKAPADNANAVVPLAASA</sequence>
<proteinExistence type="inferred from homology"/>
<feature type="chain" id="PRO_0000389662" description="Acetyl-coenzyme A carboxylase carboxyl transferase subunit beta">
    <location>
        <begin position="1"/>
        <end position="298"/>
    </location>
</feature>
<feature type="domain" description="CoA carboxyltransferase N-terminal" evidence="2">
    <location>
        <begin position="26"/>
        <end position="295"/>
    </location>
</feature>